<name>GTAQ_DICDI</name>
<keyword id="KW-0175">Coiled coil</keyword>
<keyword id="KW-0479">Metal-binding</keyword>
<keyword id="KW-1185">Reference proteome</keyword>
<keyword id="KW-0862">Zinc</keyword>
<keyword id="KW-0863">Zinc-finger</keyword>
<proteinExistence type="predicted"/>
<reference key="1">
    <citation type="journal article" date="2005" name="Nature">
        <title>The genome of the social amoeba Dictyostelium discoideum.</title>
        <authorList>
            <person name="Eichinger L."/>
            <person name="Pachebat J.A."/>
            <person name="Gloeckner G."/>
            <person name="Rajandream M.A."/>
            <person name="Sucgang R."/>
            <person name="Berriman M."/>
            <person name="Song J."/>
            <person name="Olsen R."/>
            <person name="Szafranski K."/>
            <person name="Xu Q."/>
            <person name="Tunggal B."/>
            <person name="Kummerfeld S."/>
            <person name="Madera M."/>
            <person name="Konfortov B.A."/>
            <person name="Rivero F."/>
            <person name="Bankier A.T."/>
            <person name="Lehmann R."/>
            <person name="Hamlin N."/>
            <person name="Davies R."/>
            <person name="Gaudet P."/>
            <person name="Fey P."/>
            <person name="Pilcher K."/>
            <person name="Chen G."/>
            <person name="Saunders D."/>
            <person name="Sodergren E.J."/>
            <person name="Davis P."/>
            <person name="Kerhornou A."/>
            <person name="Nie X."/>
            <person name="Hall N."/>
            <person name="Anjard C."/>
            <person name="Hemphill L."/>
            <person name="Bason N."/>
            <person name="Farbrother P."/>
            <person name="Desany B."/>
            <person name="Just E."/>
            <person name="Morio T."/>
            <person name="Rost R."/>
            <person name="Churcher C.M."/>
            <person name="Cooper J."/>
            <person name="Haydock S."/>
            <person name="van Driessche N."/>
            <person name="Cronin A."/>
            <person name="Goodhead I."/>
            <person name="Muzny D.M."/>
            <person name="Mourier T."/>
            <person name="Pain A."/>
            <person name="Lu M."/>
            <person name="Harper D."/>
            <person name="Lindsay R."/>
            <person name="Hauser H."/>
            <person name="James K.D."/>
            <person name="Quiles M."/>
            <person name="Madan Babu M."/>
            <person name="Saito T."/>
            <person name="Buchrieser C."/>
            <person name="Wardroper A."/>
            <person name="Felder M."/>
            <person name="Thangavelu M."/>
            <person name="Johnson D."/>
            <person name="Knights A."/>
            <person name="Loulseged H."/>
            <person name="Mungall K.L."/>
            <person name="Oliver K."/>
            <person name="Price C."/>
            <person name="Quail M.A."/>
            <person name="Urushihara H."/>
            <person name="Hernandez J."/>
            <person name="Rabbinowitsch E."/>
            <person name="Steffen D."/>
            <person name="Sanders M."/>
            <person name="Ma J."/>
            <person name="Kohara Y."/>
            <person name="Sharp S."/>
            <person name="Simmonds M.N."/>
            <person name="Spiegler S."/>
            <person name="Tivey A."/>
            <person name="Sugano S."/>
            <person name="White B."/>
            <person name="Walker D."/>
            <person name="Woodward J.R."/>
            <person name="Winckler T."/>
            <person name="Tanaka Y."/>
            <person name="Shaulsky G."/>
            <person name="Schleicher M."/>
            <person name="Weinstock G.M."/>
            <person name="Rosenthal A."/>
            <person name="Cox E.C."/>
            <person name="Chisholm R.L."/>
            <person name="Gibbs R.A."/>
            <person name="Loomis W.F."/>
            <person name="Platzer M."/>
            <person name="Kay R.R."/>
            <person name="Williams J.G."/>
            <person name="Dear P.H."/>
            <person name="Noegel A.A."/>
            <person name="Barrell B.G."/>
            <person name="Kuspa A."/>
        </authorList>
    </citation>
    <scope>NUCLEOTIDE SEQUENCE [LARGE SCALE GENOMIC DNA]</scope>
    <source>
        <strain>AX4</strain>
    </source>
</reference>
<evidence type="ECO:0000255" key="1"/>
<evidence type="ECO:0000255" key="2">
    <source>
        <dbReference type="PROSITE-ProRule" id="PRU00094"/>
    </source>
</evidence>
<evidence type="ECO:0000256" key="3">
    <source>
        <dbReference type="SAM" id="MobiDB-lite"/>
    </source>
</evidence>
<protein>
    <recommendedName>
        <fullName>GATA zinc finger domain-containing protein 17</fullName>
    </recommendedName>
</protein>
<organism>
    <name type="scientific">Dictyostelium discoideum</name>
    <name type="common">Social amoeba</name>
    <dbReference type="NCBI Taxonomy" id="44689"/>
    <lineage>
        <taxon>Eukaryota</taxon>
        <taxon>Amoebozoa</taxon>
        <taxon>Evosea</taxon>
        <taxon>Eumycetozoa</taxon>
        <taxon>Dictyostelia</taxon>
        <taxon>Dictyosteliales</taxon>
        <taxon>Dictyosteliaceae</taxon>
        <taxon>Dictyostelium</taxon>
    </lineage>
</organism>
<accession>Q54L80</accession>
<feature type="chain" id="PRO_0000330450" description="GATA zinc finger domain-containing protein 17">
    <location>
        <begin position="1"/>
        <end position="356"/>
    </location>
</feature>
<feature type="zinc finger region" description="GATA-type" evidence="2">
    <location>
        <begin position="304"/>
        <end position="331"/>
    </location>
</feature>
<feature type="region of interest" description="Disordered" evidence="3">
    <location>
        <begin position="158"/>
        <end position="294"/>
    </location>
</feature>
<feature type="coiled-coil region" evidence="1">
    <location>
        <begin position="91"/>
        <end position="119"/>
    </location>
</feature>
<feature type="compositionally biased region" description="Low complexity" evidence="3">
    <location>
        <begin position="158"/>
        <end position="188"/>
    </location>
</feature>
<feature type="compositionally biased region" description="Acidic residues" evidence="3">
    <location>
        <begin position="206"/>
        <end position="228"/>
    </location>
</feature>
<feature type="compositionally biased region" description="Low complexity" evidence="3">
    <location>
        <begin position="260"/>
        <end position="284"/>
    </location>
</feature>
<sequence length="356" mass="39825">MGKRKTMQSFNLESFGKNLEKKLRRNPEQLQQPIKNYKSERERDIHELIYTIKSERMFIYKNAHRHLKLALENATLALNLPMLLKDFHVTLKEFDALEASLNAELECLELQYSSDTSELLLPVNSVNTSQNTINENAITTAIASLSVNPVNTSVALSTASTSTSTPTNTTTTTTTTSNSLTKNNNSALVSKPKTRGVRSKPIDMNSSDDEEDDQKDDQDKDDSDEDNVDNTPPLDSNDSKPPSSKTKGISKTKTKGNVSTAITTTTTPITTTDSNIIGTTTTTDDITEESKVKERPPRIFPENCYVCKVTETPYWRRGTDNGVVVDLCNECGLYYMNKEKKERLSRQKHSIKNVLN</sequence>
<dbReference type="EMBL" id="AAFI02000090">
    <property type="protein sequence ID" value="EAL64019.1"/>
    <property type="molecule type" value="Genomic_DNA"/>
</dbReference>
<dbReference type="RefSeq" id="XP_637523.1">
    <property type="nucleotide sequence ID" value="XM_632431.1"/>
</dbReference>
<dbReference type="SMR" id="Q54L80"/>
<dbReference type="PaxDb" id="44689-DDB0216328"/>
<dbReference type="EnsemblProtists" id="EAL64019">
    <property type="protein sequence ID" value="EAL64019"/>
    <property type="gene ID" value="DDB_G0286843"/>
</dbReference>
<dbReference type="GeneID" id="8625821"/>
<dbReference type="KEGG" id="ddi:DDB_G0286843"/>
<dbReference type="dictyBase" id="DDB_G0286843">
    <property type="gene designation" value="gtaQ"/>
</dbReference>
<dbReference type="VEuPathDB" id="AmoebaDB:DDB_G0286843"/>
<dbReference type="HOGENOM" id="CLU_944688_0_0_1"/>
<dbReference type="InParanoid" id="Q54L80"/>
<dbReference type="PhylomeDB" id="Q54L80"/>
<dbReference type="Reactome" id="R-DDI-5689880">
    <property type="pathway name" value="Ub-specific processing proteases"/>
</dbReference>
<dbReference type="Reactome" id="R-DDI-9018519">
    <property type="pathway name" value="Estrogen-dependent gene expression"/>
</dbReference>
<dbReference type="PRO" id="PR:Q54L80"/>
<dbReference type="Proteomes" id="UP000002195">
    <property type="component" value="Chromosome 4"/>
</dbReference>
<dbReference type="GO" id="GO:0005634">
    <property type="term" value="C:nucleus"/>
    <property type="evidence" value="ECO:0000318"/>
    <property type="project" value="GO_Central"/>
</dbReference>
<dbReference type="GO" id="GO:0000981">
    <property type="term" value="F:DNA-binding transcription factor activity, RNA polymerase II-specific"/>
    <property type="evidence" value="ECO:0000318"/>
    <property type="project" value="GO_Central"/>
</dbReference>
<dbReference type="GO" id="GO:0000978">
    <property type="term" value="F:RNA polymerase II cis-regulatory region sequence-specific DNA binding"/>
    <property type="evidence" value="ECO:0000318"/>
    <property type="project" value="GO_Central"/>
</dbReference>
<dbReference type="GO" id="GO:0008270">
    <property type="term" value="F:zinc ion binding"/>
    <property type="evidence" value="ECO:0007669"/>
    <property type="project" value="UniProtKB-KW"/>
</dbReference>
<dbReference type="GO" id="GO:0000122">
    <property type="term" value="P:negative regulation of transcription by RNA polymerase II"/>
    <property type="evidence" value="ECO:0000318"/>
    <property type="project" value="GO_Central"/>
</dbReference>
<dbReference type="GO" id="GO:0045944">
    <property type="term" value="P:positive regulation of transcription by RNA polymerase II"/>
    <property type="evidence" value="ECO:0000318"/>
    <property type="project" value="GO_Central"/>
</dbReference>
<dbReference type="CDD" id="cd00202">
    <property type="entry name" value="ZnF_GATA"/>
    <property type="match status" value="1"/>
</dbReference>
<dbReference type="Gene3D" id="3.30.50.10">
    <property type="entry name" value="Erythroid Transcription Factor GATA-1, subunit A"/>
    <property type="match status" value="1"/>
</dbReference>
<dbReference type="InterPro" id="IPR000679">
    <property type="entry name" value="Znf_GATA"/>
</dbReference>
<dbReference type="InterPro" id="IPR013088">
    <property type="entry name" value="Znf_NHR/GATA"/>
</dbReference>
<dbReference type="Pfam" id="PF00320">
    <property type="entry name" value="GATA"/>
    <property type="match status" value="1"/>
</dbReference>
<dbReference type="SMART" id="SM00401">
    <property type="entry name" value="ZnF_GATA"/>
    <property type="match status" value="1"/>
</dbReference>
<dbReference type="SUPFAM" id="SSF57716">
    <property type="entry name" value="Glucocorticoid receptor-like (DNA-binding domain)"/>
    <property type="match status" value="1"/>
</dbReference>
<dbReference type="PROSITE" id="PS50114">
    <property type="entry name" value="GATA_ZN_FINGER_2"/>
    <property type="match status" value="1"/>
</dbReference>
<gene>
    <name type="primary">gtaQ</name>
    <name type="ORF">DDB_G0286843</name>
</gene>